<keyword id="KW-0472">Membrane</keyword>
<keyword id="KW-0496">Mitochondrion</keyword>
<keyword id="KW-0999">Mitochondrion inner membrane</keyword>
<keyword id="KW-1185">Reference proteome</keyword>
<keyword id="KW-0677">Repeat</keyword>
<keyword id="KW-0812">Transmembrane</keyword>
<keyword id="KW-1133">Transmembrane helix</keyword>
<keyword id="KW-0813">Transport</keyword>
<feature type="chain" id="PRO_0000090701" description="Glutamate/glycine mitochondrial carrier ymc1">
    <location>
        <begin position="1"/>
        <end position="298"/>
    </location>
</feature>
<feature type="transmembrane region" description="Helical; Name=1" evidence="1">
    <location>
        <begin position="17"/>
        <end position="37"/>
    </location>
</feature>
<feature type="transmembrane region" description="Helical; Name=2" evidence="1">
    <location>
        <begin position="67"/>
        <end position="87"/>
    </location>
</feature>
<feature type="transmembrane region" description="Helical; Name=3" evidence="1">
    <location>
        <begin position="112"/>
        <end position="132"/>
    </location>
</feature>
<feature type="transmembrane region" description="Helical; Name=4" evidence="1">
    <location>
        <begin position="172"/>
        <end position="192"/>
    </location>
</feature>
<feature type="transmembrane region" description="Helical; Name=5" evidence="1">
    <location>
        <begin position="212"/>
        <end position="232"/>
    </location>
</feature>
<feature type="transmembrane region" description="Helical; Name=6" evidence="1">
    <location>
        <begin position="266"/>
        <end position="287"/>
    </location>
</feature>
<feature type="repeat" description="Solcar 1">
    <location>
        <begin position="14"/>
        <end position="98"/>
    </location>
</feature>
<feature type="repeat" description="Solcar 2">
    <location>
        <begin position="106"/>
        <end position="193"/>
    </location>
</feature>
<feature type="repeat" description="Solcar 3">
    <location>
        <begin position="206"/>
        <end position="294"/>
    </location>
</feature>
<sequence>MEPVIPEGALSQSTKDFLAGVSGGVAQVLVGQPFDCVKVRLQSQSNVSPIYNNALDCVKKISKNEGLAAFYKGTVLPLLGIGFCVSIQFTTFEYCKRFFSRDGTPVTMPQYYVSGAISGLANSFLVGPVEHVRIRLQIQTGKNVLYHGPWDCIKKISSQYGLSGIMKGYNPTAAREAHGLGMYFLAYEALVKNTMAKHHLTDRSQTPGWKLCVFGAGAGYAMWLAAYPFDIVKSKIQTDGFLSKATYKNSWQCAKGIYTKAGLRGFYRGFVPVLVRAAPANAVTFYVYETVSQHIRHL</sequence>
<dbReference type="EMBL" id="CU329670">
    <property type="protein sequence ID" value="CAA93570.2"/>
    <property type="molecule type" value="Genomic_DNA"/>
</dbReference>
<dbReference type="PIR" id="T38879">
    <property type="entry name" value="T38879"/>
</dbReference>
<dbReference type="RefSeq" id="NP_593701.2">
    <property type="nucleotide sequence ID" value="NM_001019133.2"/>
</dbReference>
<dbReference type="SMR" id="Q10248"/>
<dbReference type="BioGRID" id="280094">
    <property type="interactions" value="12"/>
</dbReference>
<dbReference type="FunCoup" id="Q10248">
    <property type="interactions" value="153"/>
</dbReference>
<dbReference type="STRING" id="284812.Q10248"/>
<dbReference type="iPTMnet" id="Q10248"/>
<dbReference type="PaxDb" id="4896-SPAC4G9.20c.1"/>
<dbReference type="EnsemblFungi" id="SPAC4G9.20c.1">
    <property type="protein sequence ID" value="SPAC4G9.20c.1:pep"/>
    <property type="gene ID" value="SPAC4G9.20c"/>
</dbReference>
<dbReference type="GeneID" id="2543680"/>
<dbReference type="KEGG" id="spo:2543680"/>
<dbReference type="PomBase" id="SPAC4G9.20c">
    <property type="gene designation" value="ymc1"/>
</dbReference>
<dbReference type="VEuPathDB" id="FungiDB:SPAC4G9.20c"/>
<dbReference type="eggNOG" id="KOG0758">
    <property type="taxonomic scope" value="Eukaryota"/>
</dbReference>
<dbReference type="HOGENOM" id="CLU_015166_16_2_1"/>
<dbReference type="InParanoid" id="Q10248"/>
<dbReference type="OMA" id="HICRLRY"/>
<dbReference type="Reactome" id="R-SPO-70635">
    <property type="pathway name" value="Urea cycle"/>
</dbReference>
<dbReference type="PRO" id="PR:Q10248"/>
<dbReference type="Proteomes" id="UP000002485">
    <property type="component" value="Chromosome I"/>
</dbReference>
<dbReference type="GO" id="GO:0005743">
    <property type="term" value="C:mitochondrial inner membrane"/>
    <property type="evidence" value="ECO:0000250"/>
    <property type="project" value="PomBase"/>
</dbReference>
<dbReference type="GO" id="GO:0005739">
    <property type="term" value="C:mitochondrion"/>
    <property type="evidence" value="ECO:0000318"/>
    <property type="project" value="GO_Central"/>
</dbReference>
<dbReference type="GO" id="GO:0015187">
    <property type="term" value="F:glycine transmembrane transporter activity"/>
    <property type="evidence" value="ECO:0000318"/>
    <property type="project" value="GO_Central"/>
</dbReference>
<dbReference type="GO" id="GO:0005313">
    <property type="term" value="F:L-glutamate transmembrane transporter activity"/>
    <property type="evidence" value="ECO:0000266"/>
    <property type="project" value="PomBase"/>
</dbReference>
<dbReference type="GO" id="GO:1904983">
    <property type="term" value="P:glycine import into mitochondrion"/>
    <property type="evidence" value="ECO:0000266"/>
    <property type="project" value="PomBase"/>
</dbReference>
<dbReference type="GO" id="GO:0110141">
    <property type="term" value="P:L-glutamate import into mitochondrion"/>
    <property type="evidence" value="ECO:0000266"/>
    <property type="project" value="PomBase"/>
</dbReference>
<dbReference type="GO" id="GO:1990575">
    <property type="term" value="P:mitochondrial L-ornithine transmembrane transport"/>
    <property type="evidence" value="ECO:0000318"/>
    <property type="project" value="GO_Central"/>
</dbReference>
<dbReference type="Gene3D" id="1.50.40.10">
    <property type="entry name" value="Mitochondrial carrier domain"/>
    <property type="match status" value="2"/>
</dbReference>
<dbReference type="InterPro" id="IPR002067">
    <property type="entry name" value="Mit_carrier"/>
</dbReference>
<dbReference type="InterPro" id="IPR050567">
    <property type="entry name" value="Mitochondrial_Carrier"/>
</dbReference>
<dbReference type="InterPro" id="IPR018108">
    <property type="entry name" value="Mitochondrial_sb/sol_carrier"/>
</dbReference>
<dbReference type="InterPro" id="IPR023395">
    <property type="entry name" value="Mt_carrier_dom_sf"/>
</dbReference>
<dbReference type="PANTHER" id="PTHR45624">
    <property type="entry name" value="MITOCHONDRIAL BASIC AMINO ACIDS TRANSPORTER-RELATED"/>
    <property type="match status" value="1"/>
</dbReference>
<dbReference type="PANTHER" id="PTHR45624:SF12">
    <property type="entry name" value="MITOCHONDRIAL ORNITHINE TRANSPORTER 1"/>
    <property type="match status" value="1"/>
</dbReference>
<dbReference type="Pfam" id="PF00153">
    <property type="entry name" value="Mito_carr"/>
    <property type="match status" value="3"/>
</dbReference>
<dbReference type="PRINTS" id="PR00926">
    <property type="entry name" value="MITOCARRIER"/>
</dbReference>
<dbReference type="SUPFAM" id="SSF103506">
    <property type="entry name" value="Mitochondrial carrier"/>
    <property type="match status" value="1"/>
</dbReference>
<dbReference type="PROSITE" id="PS50920">
    <property type="entry name" value="SOLCAR"/>
    <property type="match status" value="3"/>
</dbReference>
<evidence type="ECO:0000255" key="1"/>
<evidence type="ECO:0000305" key="2"/>
<comment type="function">
    <text evidence="2">Acts as a glutamate and glycine mitochondrial transmembrane transporter.</text>
</comment>
<comment type="subcellular location">
    <subcellularLocation>
        <location evidence="2">Mitochondrion inner membrane</location>
        <topology evidence="2">Multi-pass membrane protein</topology>
    </subcellularLocation>
</comment>
<comment type="similarity">
    <text evidence="2">Belongs to the mitochondrial carrier (TC 2.A.29) family.</text>
</comment>
<protein>
    <recommendedName>
        <fullName evidence="2">Glutamate/glycine mitochondrial carrier ymc1</fullName>
    </recommendedName>
</protein>
<name>YMC1_SCHPO</name>
<gene>
    <name type="primary">ymc1</name>
    <name type="ORF">SPAC4G9.20c</name>
</gene>
<reference key="1">
    <citation type="journal article" date="2002" name="Nature">
        <title>The genome sequence of Schizosaccharomyces pombe.</title>
        <authorList>
            <person name="Wood V."/>
            <person name="Gwilliam R."/>
            <person name="Rajandream M.A."/>
            <person name="Lyne M.H."/>
            <person name="Lyne R."/>
            <person name="Stewart A."/>
            <person name="Sgouros J.G."/>
            <person name="Peat N."/>
            <person name="Hayles J."/>
            <person name="Baker S.G."/>
            <person name="Basham D."/>
            <person name="Bowman S."/>
            <person name="Brooks K."/>
            <person name="Brown D."/>
            <person name="Brown S."/>
            <person name="Chillingworth T."/>
            <person name="Churcher C.M."/>
            <person name="Collins M."/>
            <person name="Connor R."/>
            <person name="Cronin A."/>
            <person name="Davis P."/>
            <person name="Feltwell T."/>
            <person name="Fraser A."/>
            <person name="Gentles S."/>
            <person name="Goble A."/>
            <person name="Hamlin N."/>
            <person name="Harris D.E."/>
            <person name="Hidalgo J."/>
            <person name="Hodgson G."/>
            <person name="Holroyd S."/>
            <person name="Hornsby T."/>
            <person name="Howarth S."/>
            <person name="Huckle E.J."/>
            <person name="Hunt S."/>
            <person name="Jagels K."/>
            <person name="James K.D."/>
            <person name="Jones L."/>
            <person name="Jones M."/>
            <person name="Leather S."/>
            <person name="McDonald S."/>
            <person name="McLean J."/>
            <person name="Mooney P."/>
            <person name="Moule S."/>
            <person name="Mungall K.L."/>
            <person name="Murphy L.D."/>
            <person name="Niblett D."/>
            <person name="Odell C."/>
            <person name="Oliver K."/>
            <person name="O'Neil S."/>
            <person name="Pearson D."/>
            <person name="Quail M.A."/>
            <person name="Rabbinowitsch E."/>
            <person name="Rutherford K.M."/>
            <person name="Rutter S."/>
            <person name="Saunders D."/>
            <person name="Seeger K."/>
            <person name="Sharp S."/>
            <person name="Skelton J."/>
            <person name="Simmonds M.N."/>
            <person name="Squares R."/>
            <person name="Squares S."/>
            <person name="Stevens K."/>
            <person name="Taylor K."/>
            <person name="Taylor R.G."/>
            <person name="Tivey A."/>
            <person name="Walsh S.V."/>
            <person name="Warren T."/>
            <person name="Whitehead S."/>
            <person name="Woodward J.R."/>
            <person name="Volckaert G."/>
            <person name="Aert R."/>
            <person name="Robben J."/>
            <person name="Grymonprez B."/>
            <person name="Weltjens I."/>
            <person name="Vanstreels E."/>
            <person name="Rieger M."/>
            <person name="Schaefer M."/>
            <person name="Mueller-Auer S."/>
            <person name="Gabel C."/>
            <person name="Fuchs M."/>
            <person name="Duesterhoeft A."/>
            <person name="Fritzc C."/>
            <person name="Holzer E."/>
            <person name="Moestl D."/>
            <person name="Hilbert H."/>
            <person name="Borzym K."/>
            <person name="Langer I."/>
            <person name="Beck A."/>
            <person name="Lehrach H."/>
            <person name="Reinhardt R."/>
            <person name="Pohl T.M."/>
            <person name="Eger P."/>
            <person name="Zimmermann W."/>
            <person name="Wedler H."/>
            <person name="Wambutt R."/>
            <person name="Purnelle B."/>
            <person name="Goffeau A."/>
            <person name="Cadieu E."/>
            <person name="Dreano S."/>
            <person name="Gloux S."/>
            <person name="Lelaure V."/>
            <person name="Mottier S."/>
            <person name="Galibert F."/>
            <person name="Aves S.J."/>
            <person name="Xiang Z."/>
            <person name="Hunt C."/>
            <person name="Moore K."/>
            <person name="Hurst S.M."/>
            <person name="Lucas M."/>
            <person name="Rochet M."/>
            <person name="Gaillardin C."/>
            <person name="Tallada V.A."/>
            <person name="Garzon A."/>
            <person name="Thode G."/>
            <person name="Daga R.R."/>
            <person name="Cruzado L."/>
            <person name="Jimenez J."/>
            <person name="Sanchez M."/>
            <person name="del Rey F."/>
            <person name="Benito J."/>
            <person name="Dominguez A."/>
            <person name="Revuelta J.L."/>
            <person name="Moreno S."/>
            <person name="Armstrong J."/>
            <person name="Forsburg S.L."/>
            <person name="Cerutti L."/>
            <person name="Lowe T."/>
            <person name="McCombie W.R."/>
            <person name="Paulsen I."/>
            <person name="Potashkin J."/>
            <person name="Shpakovski G.V."/>
            <person name="Ussery D."/>
            <person name="Barrell B.G."/>
            <person name="Nurse P."/>
        </authorList>
    </citation>
    <scope>NUCLEOTIDE SEQUENCE [LARGE SCALE GENOMIC DNA]</scope>
    <source>
        <strain>972 / ATCC 24843</strain>
    </source>
</reference>
<reference key="2">
    <citation type="journal article" date="2011" name="Science">
        <title>Comparative functional genomics of the fission yeasts.</title>
        <authorList>
            <person name="Rhind N."/>
            <person name="Chen Z."/>
            <person name="Yassour M."/>
            <person name="Thompson D.A."/>
            <person name="Haas B.J."/>
            <person name="Habib N."/>
            <person name="Wapinski I."/>
            <person name="Roy S."/>
            <person name="Lin M.F."/>
            <person name="Heiman D.I."/>
            <person name="Young S.K."/>
            <person name="Furuya K."/>
            <person name="Guo Y."/>
            <person name="Pidoux A."/>
            <person name="Chen H.M."/>
            <person name="Robbertse B."/>
            <person name="Goldberg J.M."/>
            <person name="Aoki K."/>
            <person name="Bayne E.H."/>
            <person name="Berlin A.M."/>
            <person name="Desjardins C.A."/>
            <person name="Dobbs E."/>
            <person name="Dukaj L."/>
            <person name="Fan L."/>
            <person name="FitzGerald M.G."/>
            <person name="French C."/>
            <person name="Gujja S."/>
            <person name="Hansen K."/>
            <person name="Keifenheim D."/>
            <person name="Levin J.Z."/>
            <person name="Mosher R.A."/>
            <person name="Mueller C.A."/>
            <person name="Pfiffner J."/>
            <person name="Priest M."/>
            <person name="Russ C."/>
            <person name="Smialowska A."/>
            <person name="Swoboda P."/>
            <person name="Sykes S.M."/>
            <person name="Vaughn M."/>
            <person name="Vengrova S."/>
            <person name="Yoder R."/>
            <person name="Zeng Q."/>
            <person name="Allshire R."/>
            <person name="Baulcombe D."/>
            <person name="Birren B.W."/>
            <person name="Brown W."/>
            <person name="Ekwall K."/>
            <person name="Kellis M."/>
            <person name="Leatherwood J."/>
            <person name="Levin H."/>
            <person name="Margalit H."/>
            <person name="Martienssen R."/>
            <person name="Nieduszynski C.A."/>
            <person name="Spatafora J.W."/>
            <person name="Friedman N."/>
            <person name="Dalgaard J.Z."/>
            <person name="Baumann P."/>
            <person name="Niki H."/>
            <person name="Regev A."/>
            <person name="Nusbaum C."/>
        </authorList>
    </citation>
    <scope>REVISION OF GENE MODEL</scope>
</reference>
<proteinExistence type="inferred from homology"/>
<organism>
    <name type="scientific">Schizosaccharomyces pombe (strain 972 / ATCC 24843)</name>
    <name type="common">Fission yeast</name>
    <dbReference type="NCBI Taxonomy" id="284812"/>
    <lineage>
        <taxon>Eukaryota</taxon>
        <taxon>Fungi</taxon>
        <taxon>Dikarya</taxon>
        <taxon>Ascomycota</taxon>
        <taxon>Taphrinomycotina</taxon>
        <taxon>Schizosaccharomycetes</taxon>
        <taxon>Schizosaccharomycetales</taxon>
        <taxon>Schizosaccharomycetaceae</taxon>
        <taxon>Schizosaccharomyces</taxon>
    </lineage>
</organism>
<accession>Q10248</accession>